<comment type="subcellular location">
    <subcellularLocation>
        <location evidence="1">Cytoplasm</location>
        <location evidence="1">Nucleoid</location>
    </subcellularLocation>
</comment>
<comment type="similarity">
    <text evidence="1">Belongs to the YejK family.</text>
</comment>
<protein>
    <recommendedName>
        <fullName evidence="1">Nucleoid-associated protein YejK</fullName>
    </recommendedName>
</protein>
<gene>
    <name evidence="1" type="primary">yejK</name>
    <name type="ordered locus">ECED1_2637</name>
</gene>
<evidence type="ECO:0000255" key="1">
    <source>
        <dbReference type="HAMAP-Rule" id="MF_00730"/>
    </source>
</evidence>
<sequence>MSLDINQIALHQLIKRDEQNLELVLRDSLLEPTETVVEMVAELHRVYSAKNKAYGLFSEESELAQTLRLQRQGEEDFLAFSRAATGRLRDELAKYPFADGGFVLFCHYRYLAVEYLLVAVLSNLSSMRVNENLDINPTHYLDINHADIVARIDLTEWETNPESTRYLTFLKGRVGRKVADFFMDFLGASEGLNAKAQNRGLLQAVDDFTAEAQLDKAERQNVRQQVYSYCNEQLQAGEEIELESLSKELAGVSEVSFTEFAAEKGYELEESFPADRSTLRQLTKFAGSGGGLTINFDAMLLGERIFWDPATDTLTIKGTPPNLRDQLQRRTSGGN</sequence>
<accession>B7MXK2</accession>
<feature type="chain" id="PRO_1000191563" description="Nucleoid-associated protein YejK">
    <location>
        <begin position="1"/>
        <end position="335"/>
    </location>
</feature>
<dbReference type="EMBL" id="CU928162">
    <property type="protein sequence ID" value="CAR08818.2"/>
    <property type="molecule type" value="Genomic_DNA"/>
</dbReference>
<dbReference type="RefSeq" id="WP_000050789.1">
    <property type="nucleotide sequence ID" value="NC_011745.1"/>
</dbReference>
<dbReference type="SMR" id="B7MXK2"/>
<dbReference type="GeneID" id="75206440"/>
<dbReference type="KEGG" id="ecq:ECED1_2637"/>
<dbReference type="HOGENOM" id="CLU_063050_0_1_6"/>
<dbReference type="Proteomes" id="UP000000748">
    <property type="component" value="Chromosome"/>
</dbReference>
<dbReference type="GO" id="GO:0043590">
    <property type="term" value="C:bacterial nucleoid"/>
    <property type="evidence" value="ECO:0007669"/>
    <property type="project" value="TreeGrafter"/>
</dbReference>
<dbReference type="GO" id="GO:0005737">
    <property type="term" value="C:cytoplasm"/>
    <property type="evidence" value="ECO:0007669"/>
    <property type="project" value="UniProtKB-UniRule"/>
</dbReference>
<dbReference type="GO" id="GO:0003690">
    <property type="term" value="F:double-stranded DNA binding"/>
    <property type="evidence" value="ECO:0007669"/>
    <property type="project" value="TreeGrafter"/>
</dbReference>
<dbReference type="GO" id="GO:0003727">
    <property type="term" value="F:single-stranded RNA binding"/>
    <property type="evidence" value="ECO:0007669"/>
    <property type="project" value="TreeGrafter"/>
</dbReference>
<dbReference type="HAMAP" id="MF_00730">
    <property type="entry name" value="NdpA"/>
    <property type="match status" value="1"/>
</dbReference>
<dbReference type="InterPro" id="IPR007358">
    <property type="entry name" value="Nucleoid_associated_NdpA"/>
</dbReference>
<dbReference type="NCBIfam" id="NF001557">
    <property type="entry name" value="PRK00378.1"/>
    <property type="match status" value="1"/>
</dbReference>
<dbReference type="PANTHER" id="PTHR38772">
    <property type="match status" value="1"/>
</dbReference>
<dbReference type="PANTHER" id="PTHR38772:SF1">
    <property type="entry name" value="NUCLEOID-ASSOCIATED PROTEIN YEJK"/>
    <property type="match status" value="1"/>
</dbReference>
<dbReference type="Pfam" id="PF04245">
    <property type="entry name" value="NA37"/>
    <property type="match status" value="1"/>
</dbReference>
<proteinExistence type="inferred from homology"/>
<organism>
    <name type="scientific">Escherichia coli O81 (strain ED1a)</name>
    <dbReference type="NCBI Taxonomy" id="585397"/>
    <lineage>
        <taxon>Bacteria</taxon>
        <taxon>Pseudomonadati</taxon>
        <taxon>Pseudomonadota</taxon>
        <taxon>Gammaproteobacteria</taxon>
        <taxon>Enterobacterales</taxon>
        <taxon>Enterobacteriaceae</taxon>
        <taxon>Escherichia</taxon>
    </lineage>
</organism>
<reference key="1">
    <citation type="journal article" date="2009" name="PLoS Genet.">
        <title>Organised genome dynamics in the Escherichia coli species results in highly diverse adaptive paths.</title>
        <authorList>
            <person name="Touchon M."/>
            <person name="Hoede C."/>
            <person name="Tenaillon O."/>
            <person name="Barbe V."/>
            <person name="Baeriswyl S."/>
            <person name="Bidet P."/>
            <person name="Bingen E."/>
            <person name="Bonacorsi S."/>
            <person name="Bouchier C."/>
            <person name="Bouvet O."/>
            <person name="Calteau A."/>
            <person name="Chiapello H."/>
            <person name="Clermont O."/>
            <person name="Cruveiller S."/>
            <person name="Danchin A."/>
            <person name="Diard M."/>
            <person name="Dossat C."/>
            <person name="Karoui M.E."/>
            <person name="Frapy E."/>
            <person name="Garry L."/>
            <person name="Ghigo J.M."/>
            <person name="Gilles A.M."/>
            <person name="Johnson J."/>
            <person name="Le Bouguenec C."/>
            <person name="Lescat M."/>
            <person name="Mangenot S."/>
            <person name="Martinez-Jehanne V."/>
            <person name="Matic I."/>
            <person name="Nassif X."/>
            <person name="Oztas S."/>
            <person name="Petit M.A."/>
            <person name="Pichon C."/>
            <person name="Rouy Z."/>
            <person name="Ruf C.S."/>
            <person name="Schneider D."/>
            <person name="Tourret J."/>
            <person name="Vacherie B."/>
            <person name="Vallenet D."/>
            <person name="Medigue C."/>
            <person name="Rocha E.P.C."/>
            <person name="Denamur E."/>
        </authorList>
    </citation>
    <scope>NUCLEOTIDE SEQUENCE [LARGE SCALE GENOMIC DNA]</scope>
    <source>
        <strain>ED1a</strain>
    </source>
</reference>
<name>NDPA_ECO81</name>
<keyword id="KW-0963">Cytoplasm</keyword>